<gene>
    <name type="primary">pyroxd1</name>
    <name type="ORF">zgc:73254</name>
</gene>
<feature type="chain" id="PRO_0000327423" description="Pyridine nucleotide-disulfide oxidoreductase domain-containing protein 1">
    <location>
        <begin position="1"/>
        <end position="490"/>
    </location>
</feature>
<keyword id="KW-0963">Cytoplasm</keyword>
<keyword id="KW-0274">FAD</keyword>
<keyword id="KW-0285">Flavoprotein</keyword>
<keyword id="KW-0521">NADP</keyword>
<keyword id="KW-0539">Nucleus</keyword>
<keyword id="KW-0560">Oxidoreductase</keyword>
<keyword id="KW-1185">Reference proteome</keyword>
<organism>
    <name type="scientific">Danio rerio</name>
    <name type="common">Zebrafish</name>
    <name type="synonym">Brachydanio rerio</name>
    <dbReference type="NCBI Taxonomy" id="7955"/>
    <lineage>
        <taxon>Eukaryota</taxon>
        <taxon>Metazoa</taxon>
        <taxon>Chordata</taxon>
        <taxon>Craniata</taxon>
        <taxon>Vertebrata</taxon>
        <taxon>Euteleostomi</taxon>
        <taxon>Actinopterygii</taxon>
        <taxon>Neopterygii</taxon>
        <taxon>Teleostei</taxon>
        <taxon>Ostariophysi</taxon>
        <taxon>Cypriniformes</taxon>
        <taxon>Danionidae</taxon>
        <taxon>Danioninae</taxon>
        <taxon>Danio</taxon>
    </lineage>
</organism>
<protein>
    <recommendedName>
        <fullName>Pyridine nucleotide-disulfide oxidoreductase domain-containing protein 1</fullName>
        <ecNumber>1.8.1.-</ecNumber>
    </recommendedName>
</protein>
<accession>Q6PBT5</accession>
<dbReference type="EC" id="1.8.1.-"/>
<dbReference type="EMBL" id="BC059591">
    <property type="protein sequence ID" value="AAH59591.1"/>
    <property type="molecule type" value="mRNA"/>
</dbReference>
<dbReference type="RefSeq" id="NP_957057.1">
    <property type="nucleotide sequence ID" value="NM_200763.1"/>
</dbReference>
<dbReference type="SMR" id="Q6PBT5"/>
<dbReference type="FunCoup" id="Q6PBT5">
    <property type="interactions" value="794"/>
</dbReference>
<dbReference type="STRING" id="7955.ENSDARP00000132766"/>
<dbReference type="PaxDb" id="7955-ENSDARP00000042662"/>
<dbReference type="GeneID" id="393736"/>
<dbReference type="KEGG" id="dre:393736"/>
<dbReference type="AGR" id="ZFIN:ZDB-GENE-040426-1732"/>
<dbReference type="CTD" id="79912"/>
<dbReference type="ZFIN" id="ZDB-GENE-040426-1732">
    <property type="gene designation" value="pyroxd1"/>
</dbReference>
<dbReference type="eggNOG" id="KOG2755">
    <property type="taxonomic scope" value="Eukaryota"/>
</dbReference>
<dbReference type="InParanoid" id="Q6PBT5"/>
<dbReference type="OrthoDB" id="202203at2759"/>
<dbReference type="PhylomeDB" id="Q6PBT5"/>
<dbReference type="PRO" id="PR:Q6PBT5"/>
<dbReference type="Proteomes" id="UP000000437">
    <property type="component" value="Chromosome 4"/>
</dbReference>
<dbReference type="GO" id="GO:0005634">
    <property type="term" value="C:nucleus"/>
    <property type="evidence" value="ECO:0007669"/>
    <property type="project" value="UniProtKB-SubCell"/>
</dbReference>
<dbReference type="GO" id="GO:0030017">
    <property type="term" value="C:sarcomere"/>
    <property type="evidence" value="ECO:0007669"/>
    <property type="project" value="UniProtKB-SubCell"/>
</dbReference>
<dbReference type="GO" id="GO:0016491">
    <property type="term" value="F:oxidoreductase activity"/>
    <property type="evidence" value="ECO:0007669"/>
    <property type="project" value="UniProtKB-KW"/>
</dbReference>
<dbReference type="Gene3D" id="3.30.390.30">
    <property type="match status" value="1"/>
</dbReference>
<dbReference type="Gene3D" id="3.50.50.60">
    <property type="entry name" value="FAD/NAD(P)-binding domain"/>
    <property type="match status" value="3"/>
</dbReference>
<dbReference type="InterPro" id="IPR050260">
    <property type="entry name" value="FAD-bd_OxRdtase"/>
</dbReference>
<dbReference type="InterPro" id="IPR036188">
    <property type="entry name" value="FAD/NAD-bd_sf"/>
</dbReference>
<dbReference type="InterPro" id="IPR023753">
    <property type="entry name" value="FAD/NAD-binding_dom"/>
</dbReference>
<dbReference type="InterPro" id="IPR016156">
    <property type="entry name" value="FAD/NAD-linked_Rdtase_dimer_sf"/>
</dbReference>
<dbReference type="InterPro" id="IPR041575">
    <property type="entry name" value="Rubredoxin_C"/>
</dbReference>
<dbReference type="PANTHER" id="PTHR43429">
    <property type="entry name" value="PYRIDINE NUCLEOTIDE-DISULFIDE OXIDOREDUCTASE DOMAIN-CONTAINING"/>
    <property type="match status" value="1"/>
</dbReference>
<dbReference type="PANTHER" id="PTHR43429:SF2">
    <property type="entry name" value="PYRIDINE NUCLEOTIDE-DISULFIDE OXIDOREDUCTASE DOMAIN-CONTAINING PROTEIN 1"/>
    <property type="match status" value="1"/>
</dbReference>
<dbReference type="Pfam" id="PF07992">
    <property type="entry name" value="Pyr_redox_2"/>
    <property type="match status" value="2"/>
</dbReference>
<dbReference type="Pfam" id="PF18267">
    <property type="entry name" value="Rubredoxin_C"/>
    <property type="match status" value="1"/>
</dbReference>
<dbReference type="PRINTS" id="PR00368">
    <property type="entry name" value="FADPNR"/>
</dbReference>
<dbReference type="PRINTS" id="PR00411">
    <property type="entry name" value="PNDRDTASEI"/>
</dbReference>
<dbReference type="SUPFAM" id="SSF51905">
    <property type="entry name" value="FAD/NAD(P)-binding domain"/>
    <property type="match status" value="1"/>
</dbReference>
<evidence type="ECO:0000250" key="1">
    <source>
        <dbReference type="UniProtKB" id="O52582"/>
    </source>
</evidence>
<evidence type="ECO:0000250" key="2">
    <source>
        <dbReference type="UniProtKB" id="Q8WU10"/>
    </source>
</evidence>
<evidence type="ECO:0000269" key="3">
    <source>
    </source>
</evidence>
<evidence type="ECO:0000305" key="4"/>
<proteinExistence type="evidence at transcript level"/>
<name>PYRD1_DANRE</name>
<reference key="1">
    <citation type="submission" date="2003-10" db="EMBL/GenBank/DDBJ databases">
        <authorList>
            <consortium name="NIH - Zebrafish Gene Collection (ZGC) project"/>
        </authorList>
    </citation>
    <scope>NUCLEOTIDE SEQUENCE [LARGE SCALE MRNA]</scope>
    <source>
        <tissue>Eye</tissue>
    </source>
</reference>
<reference key="2">
    <citation type="journal article" date="2016" name="Am. J. Hum. Genet.">
        <title>Variants in the oxidoreductase PYROXD1 cause early-onset myopathy with internalized nuclei and myofibrillar disorganization.</title>
        <authorList>
            <person name="O'Grady G.L."/>
            <person name="Best H.A."/>
            <person name="Sztal T.E."/>
            <person name="Schartner V."/>
            <person name="Sanjuan-Vazquez M."/>
            <person name="Donkervoort S."/>
            <person name="Abath Neto O."/>
            <person name="Sutton R.B."/>
            <person name="Ilkovski B."/>
            <person name="Romero N.B."/>
            <person name="Stojkovic T."/>
            <person name="Dastgir J."/>
            <person name="Waddell L.B."/>
            <person name="Boland A."/>
            <person name="Hu Y."/>
            <person name="Williams C."/>
            <person name="Ruparelia A.A."/>
            <person name="Maisonobe T."/>
            <person name="Peduto A.J."/>
            <person name="Reddel S.W."/>
            <person name="Lek M."/>
            <person name="Tukiainen T."/>
            <person name="Cummings B.B."/>
            <person name="Joshi H."/>
            <person name="Nectoux J."/>
            <person name="Brammah S."/>
            <person name="Deleuze J.F."/>
            <person name="Ing V.O."/>
            <person name="Ramm G."/>
            <person name="Ardicli D."/>
            <person name="Nowak K.J."/>
            <person name="Talim B."/>
            <person name="Topaloglu H."/>
            <person name="Laing N.G."/>
            <person name="North K.N."/>
            <person name="MacArthur D.G."/>
            <person name="Friant S."/>
            <person name="Clarke N.F."/>
            <person name="Bryson-Richardson R.J."/>
            <person name="Boennemann C.G."/>
            <person name="Laporte J."/>
            <person name="Cooper S.T."/>
        </authorList>
    </citation>
    <scope>FUNCTION</scope>
    <scope>SUBCELLULAR LOCATION</scope>
    <scope>DISRUPTION PHENOTYPE</scope>
</reference>
<sequence length="490" mass="54257">MCGSSMASEKQVKFVIVGGGIAGVTCAEQIASQFPSDEVCLLTASPLVKKVTNFRQVSKTLEEFDIEEQPSRVLEEKYPNLKVLQSAVRLLKAREHLLETEDGQRFFYRKLCLCSGGRPKLLSKDNPHVLGIRDTDSAQEFQKRLSTAKRIVVIGNGGIALELVYEVEGCEVIWAVKDKAIGNTFFDAGAAQFLIPSLEADRREASSVCKRARYTTDSSAAGHSGSSSELGSALGPDWHEGIELRGAKQSVRGVHIEYECEVEQIYTQQELLQSEHGTKTAELGVWPAYVQLTNGKIYGCDFIVSATGVVPNTDPFLPGNNFDVAADLGLLVDDHMRTSEADVFAAGDVCSAGWEPSSIWQQMRLWTQARQMGWYAARCMAADVLDEPIELDFCFELFSHITKFFNYKVVLLGKFNAQGLGQDHELLVRCTKGQEYVKVVLSGGRMVGAVLIGETDLEETFENLILNQMDLTRYGEELLNPNIDIEDYFD</sequence>
<comment type="function">
    <text evidence="2 3">Probable FAD-dependent oxidoreductase; involved in the cellular oxidative stress response (By similarity). Required for normal sarcomere structure and muscle fiber integrity (PubMed:27745833).</text>
</comment>
<comment type="cofactor">
    <cofactor evidence="1">
        <name>FAD</name>
        <dbReference type="ChEBI" id="CHEBI:57692"/>
    </cofactor>
    <text evidence="1">Binds 1 FAD per subunit.</text>
</comment>
<comment type="subcellular location">
    <subcellularLocation>
        <location evidence="3">Nucleus</location>
    </subcellularLocation>
    <subcellularLocation>
        <location evidence="3">Cytoplasm</location>
    </subcellularLocation>
    <subcellularLocation>
        <location evidence="3">Cytoplasm</location>
        <location evidence="3">Myofibril</location>
        <location evidence="3">Sarcomere</location>
    </subcellularLocation>
</comment>
<comment type="disruption phenotype">
    <text evidence="3">Morpholino-injected embryos show severe disruption of the musculature with fragmentation of the muscle fibers, altered sarcomeric structure, loss of fiber integrity and accumulation of actin at the myosepta (PubMed:27745833). Disintegration of the myofibrils with mitochondrial infiltration of the resulting space, loss of Z-disk structures, and electron dense, nemaline-like bodies are observed by electron microscopy (PubMed:27745833).</text>
</comment>
<comment type="similarity">
    <text evidence="4">Belongs to the class-I pyridine nucleotide-disulfide oxidoreductase family. PYROXD1 subfamily.</text>
</comment>